<evidence type="ECO:0000250" key="1"/>
<evidence type="ECO:0000250" key="2">
    <source>
        <dbReference type="UniProtKB" id="Q8BWQ1"/>
    </source>
</evidence>
<evidence type="ECO:0000255" key="3"/>
<evidence type="ECO:0000269" key="4">
    <source>
    </source>
</evidence>
<evidence type="ECO:0000269" key="5">
    <source>
    </source>
</evidence>
<evidence type="ECO:0000303" key="6">
    <source>
    </source>
</evidence>
<evidence type="ECO:0000305" key="7"/>
<evidence type="ECO:0007829" key="8">
    <source>
        <dbReference type="PDB" id="7YF5"/>
    </source>
</evidence>
<accession>P36537</accession>
<accession>A8K9M3</accession>
<accession>B4DPP1</accession>
<accession>Q14CR8</accession>
<gene>
    <name type="primary">UGT2B10</name>
</gene>
<sequence>MALKWTTVLLIQLSFYFSSGSCGKVLVWAAEYSLWMNMKTILKELVQRGHEVTVLASSASILFDPNDSSTLKLEVYPTSLTKTEFENIIMQLVKRLSEIQKDTFWLPFSQEQEILWAINDIIRNFCKDVVSNKKLMKKLQESRFDIVFADAYLPCGELLAELFNIPFVYSHSFSPGYSFERHSGGFIFPPSYVPVVMSKLSDQMTFMERVKNMLYVLYFDFWFQIFNMKKWDQFYSEVLGRPTTLSETMRKADIWLMRNSWNFKFPHPFLPNVDFVGGLHCKPAKPLPKEMEEFVQSSGENGVVVFSLGSMVSNMTEERANVIATALAKIPQKVLWRFDGNKPDALGLNTRLYKWIPQNDLLGHPKTRAFITHGGANGIYEAIYHGIPMVGIPLFFDQPDNIAHMKAKGAAVRVDFNTMSSTDLLNALKTVINDPSYKENIMKLSRIQHDQPVKPLDRAVFWIEFVMRHKGAKHLRVAAHNLTWFQYHSLDVIGFLLACVATVLFIITKCCLFCFWKFARKGKKGKRD</sequence>
<comment type="function">
    <text>UDPGT is of major importance in the conjugation and subsequent elimination of potentially toxic xenobiotics and endogenous compounds.</text>
</comment>
<comment type="catalytic activity">
    <reaction>
        <text>glucuronate acceptor + UDP-alpha-D-glucuronate = acceptor beta-D-glucuronoside + UDP + H(+)</text>
        <dbReference type="Rhea" id="RHEA:21032"/>
        <dbReference type="ChEBI" id="CHEBI:15378"/>
        <dbReference type="ChEBI" id="CHEBI:58052"/>
        <dbReference type="ChEBI" id="CHEBI:58223"/>
        <dbReference type="ChEBI" id="CHEBI:132367"/>
        <dbReference type="ChEBI" id="CHEBI:132368"/>
        <dbReference type="EC" id="2.4.1.17"/>
    </reaction>
</comment>
<comment type="subcellular location">
    <subcellularLocation>
        <location evidence="7">Microsome membrane</location>
        <topology evidence="7">Single-pass membrane protein</topology>
    </subcellularLocation>
    <subcellularLocation>
        <location evidence="7">Endoplasmic reticulum membrane</location>
        <topology evidence="7">Single-pass membrane protein</topology>
    </subcellularLocation>
</comment>
<comment type="alternative products">
    <event type="alternative splicing"/>
    <isoform>
        <id>P36537-1</id>
        <name>1</name>
        <sequence type="displayed"/>
    </isoform>
    <isoform>
        <id>P36537-2</id>
        <name>2</name>
        <sequence type="described" ref="VSP_054337"/>
    </isoform>
</comment>
<comment type="similarity">
    <text evidence="7">Belongs to the UDP-glycosyltransferase family.</text>
</comment>
<reference key="1">
    <citation type="journal article" date="1993" name="Biochem. Biophys. Res. Commun.">
        <title>cDNA cloning and expression of two new members of the human liver UDP-glucuronosyltransferase 2B subfamily.</title>
        <authorList>
            <person name="Jin C.-J."/>
            <person name="Miners J.O."/>
            <person name="Lillywhite K.J."/>
            <person name="McKenzie P.I."/>
        </authorList>
    </citation>
    <scope>NUCLEOTIDE SEQUENCE [MRNA] (ISOFORM 1)</scope>
    <source>
        <tissue>Liver</tissue>
    </source>
</reference>
<reference key="2">
    <citation type="journal article" date="2004" name="Nat. Genet.">
        <title>Complete sequencing and characterization of 21,243 full-length human cDNAs.</title>
        <authorList>
            <person name="Ota T."/>
            <person name="Suzuki Y."/>
            <person name="Nishikawa T."/>
            <person name="Otsuki T."/>
            <person name="Sugiyama T."/>
            <person name="Irie R."/>
            <person name="Wakamatsu A."/>
            <person name="Hayashi K."/>
            <person name="Sato H."/>
            <person name="Nagai K."/>
            <person name="Kimura K."/>
            <person name="Makita H."/>
            <person name="Sekine M."/>
            <person name="Obayashi M."/>
            <person name="Nishi T."/>
            <person name="Shibahara T."/>
            <person name="Tanaka T."/>
            <person name="Ishii S."/>
            <person name="Yamamoto J."/>
            <person name="Saito K."/>
            <person name="Kawai Y."/>
            <person name="Isono Y."/>
            <person name="Nakamura Y."/>
            <person name="Nagahari K."/>
            <person name="Murakami K."/>
            <person name="Yasuda T."/>
            <person name="Iwayanagi T."/>
            <person name="Wagatsuma M."/>
            <person name="Shiratori A."/>
            <person name="Sudo H."/>
            <person name="Hosoiri T."/>
            <person name="Kaku Y."/>
            <person name="Kodaira H."/>
            <person name="Kondo H."/>
            <person name="Sugawara M."/>
            <person name="Takahashi M."/>
            <person name="Kanda K."/>
            <person name="Yokoi T."/>
            <person name="Furuya T."/>
            <person name="Kikkawa E."/>
            <person name="Omura Y."/>
            <person name="Abe K."/>
            <person name="Kamihara K."/>
            <person name="Katsuta N."/>
            <person name="Sato K."/>
            <person name="Tanikawa M."/>
            <person name="Yamazaki M."/>
            <person name="Ninomiya K."/>
            <person name="Ishibashi T."/>
            <person name="Yamashita H."/>
            <person name="Murakawa K."/>
            <person name="Fujimori K."/>
            <person name="Tanai H."/>
            <person name="Kimata M."/>
            <person name="Watanabe M."/>
            <person name="Hiraoka S."/>
            <person name="Chiba Y."/>
            <person name="Ishida S."/>
            <person name="Ono Y."/>
            <person name="Takiguchi S."/>
            <person name="Watanabe S."/>
            <person name="Yosida M."/>
            <person name="Hotuta T."/>
            <person name="Kusano J."/>
            <person name="Kanehori K."/>
            <person name="Takahashi-Fujii A."/>
            <person name="Hara H."/>
            <person name="Tanase T.-O."/>
            <person name="Nomura Y."/>
            <person name="Togiya S."/>
            <person name="Komai F."/>
            <person name="Hara R."/>
            <person name="Takeuchi K."/>
            <person name="Arita M."/>
            <person name="Imose N."/>
            <person name="Musashino K."/>
            <person name="Yuuki H."/>
            <person name="Oshima A."/>
            <person name="Sasaki N."/>
            <person name="Aotsuka S."/>
            <person name="Yoshikawa Y."/>
            <person name="Matsunawa H."/>
            <person name="Ichihara T."/>
            <person name="Shiohata N."/>
            <person name="Sano S."/>
            <person name="Moriya S."/>
            <person name="Momiyama H."/>
            <person name="Satoh N."/>
            <person name="Takami S."/>
            <person name="Terashima Y."/>
            <person name="Suzuki O."/>
            <person name="Nakagawa S."/>
            <person name="Senoh A."/>
            <person name="Mizoguchi H."/>
            <person name="Goto Y."/>
            <person name="Shimizu F."/>
            <person name="Wakebe H."/>
            <person name="Hishigaki H."/>
            <person name="Watanabe T."/>
            <person name="Sugiyama A."/>
            <person name="Takemoto M."/>
            <person name="Kawakami B."/>
            <person name="Yamazaki M."/>
            <person name="Watanabe K."/>
            <person name="Kumagai A."/>
            <person name="Itakura S."/>
            <person name="Fukuzumi Y."/>
            <person name="Fujimori Y."/>
            <person name="Komiyama M."/>
            <person name="Tashiro H."/>
            <person name="Tanigami A."/>
            <person name="Fujiwara T."/>
            <person name="Ono T."/>
            <person name="Yamada K."/>
            <person name="Fujii Y."/>
            <person name="Ozaki K."/>
            <person name="Hirao M."/>
            <person name="Ohmori Y."/>
            <person name="Kawabata A."/>
            <person name="Hikiji T."/>
            <person name="Kobatake N."/>
            <person name="Inagaki H."/>
            <person name="Ikema Y."/>
            <person name="Okamoto S."/>
            <person name="Okitani R."/>
            <person name="Kawakami T."/>
            <person name="Noguchi S."/>
            <person name="Itoh T."/>
            <person name="Shigeta K."/>
            <person name="Senba T."/>
            <person name="Matsumura K."/>
            <person name="Nakajima Y."/>
            <person name="Mizuno T."/>
            <person name="Morinaga M."/>
            <person name="Sasaki M."/>
            <person name="Togashi T."/>
            <person name="Oyama M."/>
            <person name="Hata H."/>
            <person name="Watanabe M."/>
            <person name="Komatsu T."/>
            <person name="Mizushima-Sugano J."/>
            <person name="Satoh T."/>
            <person name="Shirai Y."/>
            <person name="Takahashi Y."/>
            <person name="Nakagawa K."/>
            <person name="Okumura K."/>
            <person name="Nagase T."/>
            <person name="Nomura N."/>
            <person name="Kikuchi H."/>
            <person name="Masuho Y."/>
            <person name="Yamashita R."/>
            <person name="Nakai K."/>
            <person name="Yada T."/>
            <person name="Nakamura Y."/>
            <person name="Ohara O."/>
            <person name="Isogai T."/>
            <person name="Sugano S."/>
        </authorList>
    </citation>
    <scope>NUCLEOTIDE SEQUENCE [LARGE SCALE MRNA] (ISOFORMS 1 AND 2)</scope>
    <source>
        <tissue>Liver</tissue>
    </source>
</reference>
<reference key="3">
    <citation type="journal article" date="2005" name="Nature">
        <title>Generation and annotation of the DNA sequences of human chromosomes 2 and 4.</title>
        <authorList>
            <person name="Hillier L.W."/>
            <person name="Graves T.A."/>
            <person name="Fulton R.S."/>
            <person name="Fulton L.A."/>
            <person name="Pepin K.H."/>
            <person name="Minx P."/>
            <person name="Wagner-McPherson C."/>
            <person name="Layman D."/>
            <person name="Wylie K."/>
            <person name="Sekhon M."/>
            <person name="Becker M.C."/>
            <person name="Fewell G.A."/>
            <person name="Delehaunty K.D."/>
            <person name="Miner T.L."/>
            <person name="Nash W.E."/>
            <person name="Kremitzki C."/>
            <person name="Oddy L."/>
            <person name="Du H."/>
            <person name="Sun H."/>
            <person name="Bradshaw-Cordum H."/>
            <person name="Ali J."/>
            <person name="Carter J."/>
            <person name="Cordes M."/>
            <person name="Harris A."/>
            <person name="Isak A."/>
            <person name="van Brunt A."/>
            <person name="Nguyen C."/>
            <person name="Du F."/>
            <person name="Courtney L."/>
            <person name="Kalicki J."/>
            <person name="Ozersky P."/>
            <person name="Abbott S."/>
            <person name="Armstrong J."/>
            <person name="Belter E.A."/>
            <person name="Caruso L."/>
            <person name="Cedroni M."/>
            <person name="Cotton M."/>
            <person name="Davidson T."/>
            <person name="Desai A."/>
            <person name="Elliott G."/>
            <person name="Erb T."/>
            <person name="Fronick C."/>
            <person name="Gaige T."/>
            <person name="Haakenson W."/>
            <person name="Haglund K."/>
            <person name="Holmes A."/>
            <person name="Harkins R."/>
            <person name="Kim K."/>
            <person name="Kruchowski S.S."/>
            <person name="Strong C.M."/>
            <person name="Grewal N."/>
            <person name="Goyea E."/>
            <person name="Hou S."/>
            <person name="Levy A."/>
            <person name="Martinka S."/>
            <person name="Mead K."/>
            <person name="McLellan M.D."/>
            <person name="Meyer R."/>
            <person name="Randall-Maher J."/>
            <person name="Tomlinson C."/>
            <person name="Dauphin-Kohlberg S."/>
            <person name="Kozlowicz-Reilly A."/>
            <person name="Shah N."/>
            <person name="Swearengen-Shahid S."/>
            <person name="Snider J."/>
            <person name="Strong J.T."/>
            <person name="Thompson J."/>
            <person name="Yoakum M."/>
            <person name="Leonard S."/>
            <person name="Pearman C."/>
            <person name="Trani L."/>
            <person name="Radionenko M."/>
            <person name="Waligorski J.E."/>
            <person name="Wang C."/>
            <person name="Rock S.M."/>
            <person name="Tin-Wollam A.-M."/>
            <person name="Maupin R."/>
            <person name="Latreille P."/>
            <person name="Wendl M.C."/>
            <person name="Yang S.-P."/>
            <person name="Pohl C."/>
            <person name="Wallis J.W."/>
            <person name="Spieth J."/>
            <person name="Bieri T.A."/>
            <person name="Berkowicz N."/>
            <person name="Nelson J.O."/>
            <person name="Osborne J."/>
            <person name="Ding L."/>
            <person name="Meyer R."/>
            <person name="Sabo A."/>
            <person name="Shotland Y."/>
            <person name="Sinha P."/>
            <person name="Wohldmann P.E."/>
            <person name="Cook L.L."/>
            <person name="Hickenbotham M.T."/>
            <person name="Eldred J."/>
            <person name="Williams D."/>
            <person name="Jones T.A."/>
            <person name="She X."/>
            <person name="Ciccarelli F.D."/>
            <person name="Izaurralde E."/>
            <person name="Taylor J."/>
            <person name="Schmutz J."/>
            <person name="Myers R.M."/>
            <person name="Cox D.R."/>
            <person name="Huang X."/>
            <person name="McPherson J.D."/>
            <person name="Mardis E.R."/>
            <person name="Clifton S.W."/>
            <person name="Warren W.C."/>
            <person name="Chinwalla A.T."/>
            <person name="Eddy S.R."/>
            <person name="Marra M.A."/>
            <person name="Ovcharenko I."/>
            <person name="Furey T.S."/>
            <person name="Miller W."/>
            <person name="Eichler E.E."/>
            <person name="Bork P."/>
            <person name="Suyama M."/>
            <person name="Torrents D."/>
            <person name="Waterston R.H."/>
            <person name="Wilson R.K."/>
        </authorList>
    </citation>
    <scope>NUCLEOTIDE SEQUENCE [LARGE SCALE GENOMIC DNA]</scope>
</reference>
<reference key="4">
    <citation type="submission" date="2005-07" db="EMBL/GenBank/DDBJ databases">
        <authorList>
            <person name="Mural R.J."/>
            <person name="Istrail S."/>
            <person name="Sutton G.G."/>
            <person name="Florea L."/>
            <person name="Halpern A.L."/>
            <person name="Mobarry C.M."/>
            <person name="Lippert R."/>
            <person name="Walenz B."/>
            <person name="Shatkay H."/>
            <person name="Dew I."/>
            <person name="Miller J.R."/>
            <person name="Flanigan M.J."/>
            <person name="Edwards N.J."/>
            <person name="Bolanos R."/>
            <person name="Fasulo D."/>
            <person name="Halldorsson B.V."/>
            <person name="Hannenhalli S."/>
            <person name="Turner R."/>
            <person name="Yooseph S."/>
            <person name="Lu F."/>
            <person name="Nusskern D.R."/>
            <person name="Shue B.C."/>
            <person name="Zheng X.H."/>
            <person name="Zhong F."/>
            <person name="Delcher A.L."/>
            <person name="Huson D.H."/>
            <person name="Kravitz S.A."/>
            <person name="Mouchard L."/>
            <person name="Reinert K."/>
            <person name="Remington K.A."/>
            <person name="Clark A.G."/>
            <person name="Waterman M.S."/>
            <person name="Eichler E.E."/>
            <person name="Adams M.D."/>
            <person name="Hunkapiller M.W."/>
            <person name="Myers E.W."/>
            <person name="Venter J.C."/>
        </authorList>
    </citation>
    <scope>NUCLEOTIDE SEQUENCE [LARGE SCALE GENOMIC DNA]</scope>
</reference>
<reference key="5">
    <citation type="journal article" date="2004" name="Genome Res.">
        <title>The status, quality, and expansion of the NIH full-length cDNA project: the Mammalian Gene Collection (MGC).</title>
        <authorList>
            <consortium name="The MGC Project Team"/>
        </authorList>
    </citation>
    <scope>NUCLEOTIDE SEQUENCE [LARGE SCALE MRNA] (ISOFORM 1)</scope>
    <source>
        <tissue>Liver</tissue>
    </source>
</reference>
<reference key="6">
    <citation type="journal article" date="2005" name="J. Proteome Res.">
        <title>Human plasma N-glycoproteome analysis by immunoaffinity subtraction, hydrazide chemistry, and mass spectrometry.</title>
        <authorList>
            <person name="Liu T."/>
            <person name="Qian W.-J."/>
            <person name="Gritsenko M.A."/>
            <person name="Camp D.G. II"/>
            <person name="Monroe M.E."/>
            <person name="Moore R.J."/>
            <person name="Smith R.D."/>
        </authorList>
    </citation>
    <scope>GLYCOSYLATION [LARGE SCALE ANALYSIS] AT ASN-314</scope>
    <source>
        <tissue>Plasma</tissue>
    </source>
</reference>
<reference key="7">
    <citation type="journal article" date="2009" name="J. Proteome Res.">
        <title>Glycoproteomics analysis of human liver tissue by combination of multiple enzyme digestion and hydrazide chemistry.</title>
        <authorList>
            <person name="Chen R."/>
            <person name="Jiang X."/>
            <person name="Sun D."/>
            <person name="Han G."/>
            <person name="Wang F."/>
            <person name="Ye M."/>
            <person name="Wang L."/>
            <person name="Zou H."/>
        </authorList>
    </citation>
    <scope>GLYCOSYLATION [LARGE SCALE ANALYSIS] AT ASN-314</scope>
    <source>
        <tissue>Liver</tissue>
    </source>
</reference>
<dbReference type="EC" id="2.4.1.17"/>
<dbReference type="EMBL" id="X63359">
    <property type="protein sequence ID" value="CAA44961.1"/>
    <property type="molecule type" value="mRNA"/>
</dbReference>
<dbReference type="EMBL" id="AK292738">
    <property type="protein sequence ID" value="BAF85427.1"/>
    <property type="molecule type" value="mRNA"/>
</dbReference>
<dbReference type="EMBL" id="AK298432">
    <property type="protein sequence ID" value="BAG60653.1"/>
    <property type="molecule type" value="mRNA"/>
</dbReference>
<dbReference type="EMBL" id="AC021146">
    <property type="status" value="NOT_ANNOTATED_CDS"/>
    <property type="molecule type" value="Genomic_DNA"/>
</dbReference>
<dbReference type="EMBL" id="CH471057">
    <property type="protein sequence ID" value="EAX05577.1"/>
    <property type="molecule type" value="Genomic_DNA"/>
</dbReference>
<dbReference type="EMBL" id="BC113649">
    <property type="protein sequence ID" value="AAI13650.1"/>
    <property type="molecule type" value="mRNA"/>
</dbReference>
<dbReference type="CCDS" id="CCDS75135.1">
    <molecule id="P36537-2"/>
</dbReference>
<dbReference type="CCDS" id="CCDS75136.1">
    <molecule id="P36537-1"/>
</dbReference>
<dbReference type="PIR" id="JN0620">
    <property type="entry name" value="JN0620"/>
</dbReference>
<dbReference type="RefSeq" id="NP_001066.1">
    <molecule id="P36537-1"/>
    <property type="nucleotide sequence ID" value="NM_001075.6"/>
</dbReference>
<dbReference type="RefSeq" id="NP_001138239.1">
    <molecule id="P36537-2"/>
    <property type="nucleotide sequence ID" value="NM_001144767.3"/>
</dbReference>
<dbReference type="RefSeq" id="NP_001277020.1">
    <property type="nucleotide sequence ID" value="NM_001290091.1"/>
</dbReference>
<dbReference type="PDB" id="7YF5">
    <property type="method" value="X-ray"/>
    <property type="resolution" value="1.53 A"/>
    <property type="chains" value="A/B=282-449"/>
</dbReference>
<dbReference type="PDBsum" id="7YF5"/>
<dbReference type="SMR" id="P36537"/>
<dbReference type="BioGRID" id="113212">
    <property type="interactions" value="4"/>
</dbReference>
<dbReference type="FunCoup" id="P36537">
    <property type="interactions" value="323"/>
</dbReference>
<dbReference type="IntAct" id="P36537">
    <property type="interactions" value="2"/>
</dbReference>
<dbReference type="STRING" id="9606.ENSP00000265403"/>
<dbReference type="BindingDB" id="P36537"/>
<dbReference type="ChEMBL" id="CHEMBL6160"/>
<dbReference type="DrugBank" id="DB00321">
    <property type="generic name" value="Amitriptyline"/>
</dbReference>
<dbReference type="DrugBank" id="DB00924">
    <property type="generic name" value="Cyclobenzaprine"/>
</dbReference>
<dbReference type="DrugBank" id="DB00434">
    <property type="generic name" value="Cyproheptadine"/>
</dbReference>
<dbReference type="DrugBank" id="DB00920">
    <property type="generic name" value="Ketotifen"/>
</dbReference>
<dbReference type="DrugBank" id="DB00455">
    <property type="generic name" value="Loratadine"/>
</dbReference>
<dbReference type="DrugBank" id="DB11837">
    <property type="generic name" value="Osilodrostat"/>
</dbReference>
<dbReference type="DrugBank" id="DB06153">
    <property type="generic name" value="Pizotifen"/>
</dbReference>
<dbReference type="CAZy" id="GT1">
    <property type="family name" value="Glycosyltransferase Family 1"/>
</dbReference>
<dbReference type="GlyCosmos" id="P36537">
    <property type="glycosylation" value="3 sites, No reported glycans"/>
</dbReference>
<dbReference type="GlyGen" id="P36537">
    <property type="glycosylation" value="3 sites, 2 N-linked glycans (1 site)"/>
</dbReference>
<dbReference type="iPTMnet" id="P36537"/>
<dbReference type="PhosphoSitePlus" id="P36537"/>
<dbReference type="SwissPalm" id="P36537"/>
<dbReference type="BioMuta" id="UGT2B10"/>
<dbReference type="DMDM" id="549155"/>
<dbReference type="jPOST" id="P36537"/>
<dbReference type="MassIVE" id="P36537"/>
<dbReference type="PaxDb" id="9606-ENSP00000265403"/>
<dbReference type="PeptideAtlas" id="P36537"/>
<dbReference type="ProteomicsDB" id="4800"/>
<dbReference type="ProteomicsDB" id="55206">
    <molecule id="P36537-1"/>
</dbReference>
<dbReference type="Antibodypedia" id="24201">
    <property type="antibodies" value="129 antibodies from 23 providers"/>
</dbReference>
<dbReference type="DNASU" id="7365"/>
<dbReference type="Ensembl" id="ENST00000265403.12">
    <molecule id="P36537-1"/>
    <property type="protein sequence ID" value="ENSP00000265403.7"/>
    <property type="gene ID" value="ENSG00000109181.12"/>
</dbReference>
<dbReference type="Ensembl" id="ENST00000458688.2">
    <molecule id="P36537-2"/>
    <property type="protein sequence ID" value="ENSP00000413420.2"/>
    <property type="gene ID" value="ENSG00000109181.12"/>
</dbReference>
<dbReference type="Ensembl" id="ENST00000615213.3">
    <molecule id="P36537-1"/>
    <property type="protein sequence ID" value="ENSP00000478760.1"/>
    <property type="gene ID" value="ENSG00000275190.3"/>
</dbReference>
<dbReference type="Ensembl" id="ENST00000627047.1">
    <molecule id="P36537-2"/>
    <property type="protein sequence ID" value="ENSP00000486876.1"/>
    <property type="gene ID" value="ENSG00000275190.3"/>
</dbReference>
<dbReference type="GeneID" id="7365"/>
<dbReference type="KEGG" id="hsa:7365"/>
<dbReference type="MANE-Select" id="ENST00000265403.12">
    <property type="protein sequence ID" value="ENSP00000265403.7"/>
    <property type="RefSeq nucleotide sequence ID" value="NM_001075.6"/>
    <property type="RefSeq protein sequence ID" value="NP_001066.1"/>
</dbReference>
<dbReference type="UCSC" id="uc003hee.4">
    <molecule id="P36537-1"/>
    <property type="organism name" value="human"/>
</dbReference>
<dbReference type="AGR" id="HGNC:12544"/>
<dbReference type="CTD" id="7365"/>
<dbReference type="DisGeNET" id="7365"/>
<dbReference type="GeneCards" id="UGT2B10"/>
<dbReference type="HGNC" id="HGNC:12544">
    <property type="gene designation" value="UGT2B10"/>
</dbReference>
<dbReference type="HPA" id="ENSG00000109181">
    <property type="expression patterns" value="Tissue enriched (liver)"/>
</dbReference>
<dbReference type="MIM" id="600070">
    <property type="type" value="gene"/>
</dbReference>
<dbReference type="neXtProt" id="NX_P36537"/>
<dbReference type="OpenTargets" id="ENSG00000109181"/>
<dbReference type="PharmGKB" id="PA37186"/>
<dbReference type="VEuPathDB" id="HostDB:ENSG00000109181"/>
<dbReference type="eggNOG" id="KOG1192">
    <property type="taxonomic scope" value="Eukaryota"/>
</dbReference>
<dbReference type="GeneTree" id="ENSGT00940000165281"/>
<dbReference type="HOGENOM" id="CLU_012949_3_0_1"/>
<dbReference type="InParanoid" id="P36537"/>
<dbReference type="OMA" id="YLPCGEL"/>
<dbReference type="OrthoDB" id="9473804at2759"/>
<dbReference type="PAN-GO" id="P36537">
    <property type="GO annotations" value="3 GO annotations based on evolutionary models"/>
</dbReference>
<dbReference type="PhylomeDB" id="P36537"/>
<dbReference type="TreeFam" id="TF315472"/>
<dbReference type="BRENDA" id="2.4.1.17">
    <property type="organism ID" value="2681"/>
</dbReference>
<dbReference type="PathwayCommons" id="P36537"/>
<dbReference type="Reactome" id="R-HSA-156588">
    <property type="pathway name" value="Glucuronidation"/>
</dbReference>
<dbReference type="Reactome" id="R-HSA-9749641">
    <property type="pathway name" value="Aspirin ADME"/>
</dbReference>
<dbReference type="SignaLink" id="P36537"/>
<dbReference type="BioGRID-ORCS" id="7365">
    <property type="hits" value="11 hits in 299 CRISPR screens"/>
</dbReference>
<dbReference type="ChiTaRS" id="UGT2B10">
    <property type="organism name" value="human"/>
</dbReference>
<dbReference type="GeneWiki" id="UGT2B10"/>
<dbReference type="GenomeRNAi" id="7365"/>
<dbReference type="Pharos" id="P36537">
    <property type="development level" value="Tbio"/>
</dbReference>
<dbReference type="PRO" id="PR:P36537"/>
<dbReference type="Proteomes" id="UP000005640">
    <property type="component" value="Chromosome 4"/>
</dbReference>
<dbReference type="RNAct" id="P36537">
    <property type="molecule type" value="protein"/>
</dbReference>
<dbReference type="Bgee" id="ENSG00000109181">
    <property type="expression patterns" value="Expressed in liver and 23 other cell types or tissues"/>
</dbReference>
<dbReference type="GO" id="GO:0005789">
    <property type="term" value="C:endoplasmic reticulum membrane"/>
    <property type="evidence" value="ECO:0007669"/>
    <property type="project" value="UniProtKB-SubCell"/>
</dbReference>
<dbReference type="GO" id="GO:0008194">
    <property type="term" value="F:UDP-glycosyltransferase activity"/>
    <property type="evidence" value="ECO:0000318"/>
    <property type="project" value="GO_Central"/>
</dbReference>
<dbReference type="GO" id="GO:0008210">
    <property type="term" value="P:estrogen metabolic process"/>
    <property type="evidence" value="ECO:0000318"/>
    <property type="project" value="GO_Central"/>
</dbReference>
<dbReference type="GO" id="GO:0006629">
    <property type="term" value="P:lipid metabolic process"/>
    <property type="evidence" value="ECO:0000304"/>
    <property type="project" value="ProtInc"/>
</dbReference>
<dbReference type="CDD" id="cd03784">
    <property type="entry name" value="GT1_Gtf-like"/>
    <property type="match status" value="1"/>
</dbReference>
<dbReference type="FunFam" id="3.40.50.2000:FF:000001">
    <property type="entry name" value="UDP-glucuronosyltransferase"/>
    <property type="match status" value="1"/>
</dbReference>
<dbReference type="FunFam" id="3.40.50.2000:FF:000081">
    <property type="entry name" value="UDP-glucuronosyltransferase 2A2"/>
    <property type="match status" value="1"/>
</dbReference>
<dbReference type="Gene3D" id="3.40.50.2000">
    <property type="entry name" value="Glycogen Phosphorylase B"/>
    <property type="match status" value="2"/>
</dbReference>
<dbReference type="InterPro" id="IPR050271">
    <property type="entry name" value="UDP-glycosyltransferase"/>
</dbReference>
<dbReference type="InterPro" id="IPR002213">
    <property type="entry name" value="UDP_glucos_trans"/>
</dbReference>
<dbReference type="InterPro" id="IPR035595">
    <property type="entry name" value="UDP_glycos_trans_CS"/>
</dbReference>
<dbReference type="PANTHER" id="PTHR48043">
    <property type="entry name" value="EG:EG0003.4 PROTEIN-RELATED"/>
    <property type="match status" value="1"/>
</dbReference>
<dbReference type="PANTHER" id="PTHR48043:SF86">
    <property type="entry name" value="UDP-GLUCURONOSYLTRANSFERASE 2B10-RELATED"/>
    <property type="match status" value="1"/>
</dbReference>
<dbReference type="Pfam" id="PF00201">
    <property type="entry name" value="UDPGT"/>
    <property type="match status" value="1"/>
</dbReference>
<dbReference type="SUPFAM" id="SSF53756">
    <property type="entry name" value="UDP-Glycosyltransferase/glycogen phosphorylase"/>
    <property type="match status" value="1"/>
</dbReference>
<dbReference type="PROSITE" id="PS00375">
    <property type="entry name" value="UDPGT"/>
    <property type="match status" value="1"/>
</dbReference>
<name>UDB10_HUMAN</name>
<feature type="signal peptide" evidence="1">
    <location>
        <begin position="1"/>
        <end position="23"/>
    </location>
</feature>
<feature type="chain" id="PRO_0000036034" description="UDP-glucuronosyltransferase 2B10">
    <location>
        <begin position="24"/>
        <end position="528"/>
    </location>
</feature>
<feature type="transmembrane region" description="Helical" evidence="3">
    <location>
        <begin position="492"/>
        <end position="512"/>
    </location>
</feature>
<feature type="modified residue" description="N6-succinyllysine" evidence="2">
    <location>
        <position position="134"/>
    </location>
</feature>
<feature type="glycosylation site" description="N-linked (GlcNAc...) asparagine" evidence="3">
    <location>
        <position position="66"/>
    </location>
</feature>
<feature type="glycosylation site" description="N-linked (GlcNAc...) asparagine" evidence="4 5">
    <location>
        <position position="314"/>
    </location>
</feature>
<feature type="glycosylation site" description="N-linked (GlcNAc...) asparagine" evidence="3">
    <location>
        <position position="481"/>
    </location>
</feature>
<feature type="splice variant" id="VSP_054337" description="In isoform 2." evidence="6">
    <location>
        <begin position="156"/>
        <end position="239"/>
    </location>
</feature>
<feature type="helix" evidence="8">
    <location>
        <begin position="289"/>
        <end position="296"/>
    </location>
</feature>
<feature type="turn" evidence="8">
    <location>
        <begin position="297"/>
        <end position="301"/>
    </location>
</feature>
<feature type="strand" evidence="8">
    <location>
        <begin position="303"/>
        <end position="307"/>
    </location>
</feature>
<feature type="helix" evidence="8">
    <location>
        <begin position="317"/>
        <end position="327"/>
    </location>
</feature>
<feature type="strand" evidence="8">
    <location>
        <begin position="330"/>
        <end position="337"/>
    </location>
</feature>
<feature type="strand" evidence="8">
    <location>
        <begin position="350"/>
        <end position="354"/>
    </location>
</feature>
<feature type="helix" evidence="8">
    <location>
        <begin position="358"/>
        <end position="362"/>
    </location>
</feature>
<feature type="strand" evidence="8">
    <location>
        <begin position="367"/>
        <end position="372"/>
    </location>
</feature>
<feature type="helix" evidence="8">
    <location>
        <begin position="376"/>
        <end position="385"/>
    </location>
</feature>
<feature type="strand" evidence="8">
    <location>
        <begin position="389"/>
        <end position="391"/>
    </location>
</feature>
<feature type="helix" evidence="8">
    <location>
        <begin position="398"/>
        <end position="407"/>
    </location>
</feature>
<feature type="strand" evidence="8">
    <location>
        <begin position="410"/>
        <end position="413"/>
    </location>
</feature>
<feature type="turn" evidence="8">
    <location>
        <begin position="416"/>
        <end position="418"/>
    </location>
</feature>
<feature type="helix" evidence="8">
    <location>
        <begin position="421"/>
        <end position="433"/>
    </location>
</feature>
<feature type="helix" evidence="8">
    <location>
        <begin position="436"/>
        <end position="445"/>
    </location>
</feature>
<protein>
    <recommendedName>
        <fullName>UDP-glucuronosyltransferase 2B10</fullName>
        <shortName>UDPGT 2B10</shortName>
        <ecNumber>2.4.1.17</ecNumber>
    </recommendedName>
</protein>
<keyword id="KW-0002">3D-structure</keyword>
<keyword id="KW-0025">Alternative splicing</keyword>
<keyword id="KW-0256">Endoplasmic reticulum</keyword>
<keyword id="KW-0325">Glycoprotein</keyword>
<keyword id="KW-0328">Glycosyltransferase</keyword>
<keyword id="KW-0472">Membrane</keyword>
<keyword id="KW-0492">Microsome</keyword>
<keyword id="KW-1267">Proteomics identification</keyword>
<keyword id="KW-1185">Reference proteome</keyword>
<keyword id="KW-0732">Signal</keyword>
<keyword id="KW-0808">Transferase</keyword>
<keyword id="KW-0812">Transmembrane</keyword>
<keyword id="KW-1133">Transmembrane helix</keyword>
<organism>
    <name type="scientific">Homo sapiens</name>
    <name type="common">Human</name>
    <dbReference type="NCBI Taxonomy" id="9606"/>
    <lineage>
        <taxon>Eukaryota</taxon>
        <taxon>Metazoa</taxon>
        <taxon>Chordata</taxon>
        <taxon>Craniata</taxon>
        <taxon>Vertebrata</taxon>
        <taxon>Euteleostomi</taxon>
        <taxon>Mammalia</taxon>
        <taxon>Eutheria</taxon>
        <taxon>Euarchontoglires</taxon>
        <taxon>Primates</taxon>
        <taxon>Haplorrhini</taxon>
        <taxon>Catarrhini</taxon>
        <taxon>Hominidae</taxon>
        <taxon>Homo</taxon>
    </lineage>
</organism>
<proteinExistence type="evidence at protein level"/>